<gene>
    <name type="primary">ANXA2</name>
    <name type="synonym">ANX2</name>
</gene>
<protein>
    <recommendedName>
        <fullName>Annexin A2</fullName>
    </recommendedName>
    <alternativeName>
        <fullName>Annexin II</fullName>
    </alternativeName>
    <alternativeName>
        <fullName>Annexin-2</fullName>
    </alternativeName>
    <alternativeName>
        <fullName>Calpactin I heavy chain</fullName>
    </alternativeName>
    <alternativeName>
        <fullName>Calpactin-1 heavy chain</fullName>
    </alternativeName>
    <alternativeName>
        <fullName>Chromobindin-8</fullName>
    </alternativeName>
    <alternativeName>
        <fullName>Lipocortin II</fullName>
    </alternativeName>
    <alternativeName>
        <fullName>Placental anticoagulant protein IV</fullName>
        <shortName>PAP-IV</shortName>
    </alternativeName>
    <alternativeName>
        <fullName>Protein I</fullName>
    </alternativeName>
    <alternativeName>
        <fullName>p36</fullName>
    </alternativeName>
</protein>
<feature type="initiator methionine" description="Removed" evidence="8">
    <location>
        <position position="1"/>
    </location>
</feature>
<feature type="chain" id="PRO_0000067469" description="Annexin A2">
    <location>
        <begin position="2"/>
        <end position="339"/>
    </location>
</feature>
<feature type="repeat" description="Annexin 1" evidence="7">
    <location>
        <begin position="33"/>
        <end position="104"/>
    </location>
</feature>
<feature type="repeat" description="Annexin 2" evidence="7">
    <location>
        <begin position="105"/>
        <end position="176"/>
    </location>
</feature>
<feature type="repeat" description="Annexin 3" evidence="7">
    <location>
        <begin position="189"/>
        <end position="261"/>
    </location>
</feature>
<feature type="repeat" description="Annexin 4" evidence="7">
    <location>
        <begin position="265"/>
        <end position="336"/>
    </location>
</feature>
<feature type="region of interest" description="S100A10-binding site" evidence="6">
    <location>
        <begin position="2"/>
        <end position="24"/>
    </location>
</feature>
<feature type="modified residue" description="N-acetylserine" evidence="8">
    <location>
        <position position="2"/>
    </location>
</feature>
<feature type="modified residue" description="Phosphotyrosine; by SRC" evidence="3">
    <location>
        <position position="24"/>
    </location>
</feature>
<feature type="modified residue" description="Phosphoserine; by PKC" evidence="3">
    <location>
        <position position="26"/>
    </location>
</feature>
<feature type="modified residue" description="N6-acetyllysine; alternate" evidence="4">
    <location>
        <position position="49"/>
    </location>
</feature>
<feature type="modified residue" description="N6-acetyllysine" evidence="4">
    <location>
        <position position="152"/>
    </location>
</feature>
<feature type="modified residue" description="Phosphoserine" evidence="3">
    <location>
        <position position="184"/>
    </location>
</feature>
<feature type="modified residue" description="Phosphotyrosine" evidence="4">
    <location>
        <position position="199"/>
    </location>
</feature>
<feature type="modified residue" description="N6-acetyllysine" evidence="4">
    <location>
        <position position="227"/>
    </location>
</feature>
<feature type="cross-link" description="Glycyl lysine isopeptide (Lys-Gly) (interchain with G-Cter in SUMO1); alternate" evidence="3">
    <location>
        <position position="49"/>
    </location>
</feature>
<feature type="cross-link" description="Glycyl lysine isopeptide (Lys-Gly) (interchain with G-Cter in SUMO2); alternate" evidence="3">
    <location>
        <position position="49"/>
    </location>
</feature>
<feature type="sequence conflict" description="In Ref. 3; AAI02517." evidence="9" ref="3">
    <original>E</original>
    <variation>G</variation>
    <location>
        <position position="149"/>
    </location>
</feature>
<feature type="helix" evidence="10">
    <location>
        <begin position="35"/>
        <end position="47"/>
    </location>
</feature>
<feature type="helix" evidence="10">
    <location>
        <begin position="53"/>
        <end position="60"/>
    </location>
</feature>
<feature type="helix" evidence="10">
    <location>
        <begin position="65"/>
        <end position="79"/>
    </location>
</feature>
<feature type="helix" evidence="10">
    <location>
        <begin position="83"/>
        <end position="90"/>
    </location>
</feature>
<feature type="helix" evidence="10">
    <location>
        <begin position="93"/>
        <end position="103"/>
    </location>
</feature>
<feature type="helix" evidence="10">
    <location>
        <begin position="106"/>
        <end position="117"/>
    </location>
</feature>
<feature type="helix" evidence="10">
    <location>
        <begin position="125"/>
        <end position="133"/>
    </location>
</feature>
<feature type="helix" evidence="10">
    <location>
        <begin position="137"/>
        <end position="151"/>
    </location>
</feature>
<feature type="helix" evidence="10">
    <location>
        <begin position="155"/>
        <end position="162"/>
    </location>
</feature>
<feature type="helix" evidence="10">
    <location>
        <begin position="165"/>
        <end position="175"/>
    </location>
</feature>
<feature type="helix" evidence="10">
    <location>
        <begin position="188"/>
        <end position="200"/>
    </location>
</feature>
<feature type="turn" evidence="10">
    <location>
        <begin position="201"/>
        <end position="204"/>
    </location>
</feature>
<feature type="strand" evidence="10">
    <location>
        <begin position="205"/>
        <end position="207"/>
    </location>
</feature>
<feature type="helix" evidence="10">
    <location>
        <begin position="210"/>
        <end position="219"/>
    </location>
</feature>
<feature type="helix" evidence="10">
    <location>
        <begin position="222"/>
        <end position="235"/>
    </location>
</feature>
<feature type="helix" evidence="10">
    <location>
        <begin position="240"/>
        <end position="247"/>
    </location>
</feature>
<feature type="helix" evidence="10">
    <location>
        <begin position="250"/>
        <end position="264"/>
    </location>
</feature>
<feature type="helix" evidence="10">
    <location>
        <begin position="266"/>
        <end position="278"/>
    </location>
</feature>
<feature type="strand" evidence="10">
    <location>
        <begin position="279"/>
        <end position="282"/>
    </location>
</feature>
<feature type="helix" evidence="10">
    <location>
        <begin position="285"/>
        <end position="295"/>
    </location>
</feature>
<feature type="turn" evidence="10">
    <location>
        <begin position="296"/>
        <end position="299"/>
    </location>
</feature>
<feature type="helix" evidence="10">
    <location>
        <begin position="300"/>
        <end position="311"/>
    </location>
</feature>
<feature type="helix" evidence="10">
    <location>
        <begin position="315"/>
        <end position="322"/>
    </location>
</feature>
<feature type="helix" evidence="10">
    <location>
        <begin position="325"/>
        <end position="335"/>
    </location>
</feature>
<dbReference type="EMBL" id="M14056">
    <property type="protein sequence ID" value="AAA30421.1"/>
    <property type="molecule type" value="mRNA"/>
</dbReference>
<dbReference type="EMBL" id="BT021010">
    <property type="protein sequence ID" value="AAX09027.1"/>
    <property type="molecule type" value="mRNA"/>
</dbReference>
<dbReference type="EMBL" id="BC102516">
    <property type="protein sequence ID" value="AAI02517.1"/>
    <property type="molecule type" value="mRNA"/>
</dbReference>
<dbReference type="PIR" id="A03081">
    <property type="entry name" value="LUBO36"/>
</dbReference>
<dbReference type="RefSeq" id="NP_777141.1">
    <property type="nucleotide sequence ID" value="NM_174716.1"/>
</dbReference>
<dbReference type="PDB" id="4X9P">
    <property type="method" value="X-ray"/>
    <property type="resolution" value="2.01 A"/>
    <property type="chains" value="A=1-339"/>
</dbReference>
<dbReference type="PDBsum" id="4X9P"/>
<dbReference type="SMR" id="P04272"/>
<dbReference type="FunCoup" id="P04272">
    <property type="interactions" value="875"/>
</dbReference>
<dbReference type="IntAct" id="P04272">
    <property type="interactions" value="1"/>
</dbReference>
<dbReference type="STRING" id="9913.ENSBTAP00000012655"/>
<dbReference type="ChEMBL" id="CHEMBL3308972"/>
<dbReference type="iPTMnet" id="P04272"/>
<dbReference type="PaxDb" id="9913-ENSBTAP00000012655"/>
<dbReference type="PeptideAtlas" id="P04272"/>
<dbReference type="Ensembl" id="ENSBTAT00000012655.4">
    <property type="protein sequence ID" value="ENSBTAP00000012655.3"/>
    <property type="gene ID" value="ENSBTAG00000009615.5"/>
</dbReference>
<dbReference type="GeneID" id="282689"/>
<dbReference type="KEGG" id="bta:282689"/>
<dbReference type="CTD" id="302"/>
<dbReference type="VEuPathDB" id="HostDB:ENSBTAG00000009615"/>
<dbReference type="eggNOG" id="KOG0819">
    <property type="taxonomic scope" value="Eukaryota"/>
</dbReference>
<dbReference type="GeneTree" id="ENSGT00940000154257"/>
<dbReference type="HOGENOM" id="CLU_025300_0_0_1"/>
<dbReference type="InParanoid" id="P04272"/>
<dbReference type="OMA" id="DLMRIRT"/>
<dbReference type="OrthoDB" id="37886at2759"/>
<dbReference type="TreeFam" id="TF105452"/>
<dbReference type="Reactome" id="R-BTA-6798695">
    <property type="pathway name" value="Neutrophil degranulation"/>
</dbReference>
<dbReference type="Reactome" id="R-BTA-75205">
    <property type="pathway name" value="Dissolution of Fibrin Clot"/>
</dbReference>
<dbReference type="Reactome" id="R-BTA-9860927">
    <property type="pathway name" value="Turbulent (oscillatory, disturbed) flow shear stress activates signaling by PIEZO1 and integrins in endothelial cells"/>
</dbReference>
<dbReference type="CD-CODE" id="D7FE2080">
    <property type="entry name" value="Nucleolus"/>
</dbReference>
<dbReference type="EvolutionaryTrace" id="P04272"/>
<dbReference type="Proteomes" id="UP000009136">
    <property type="component" value="Chromosome 10"/>
</dbReference>
<dbReference type="Bgee" id="ENSBTAG00000009615">
    <property type="expression patterns" value="Expressed in placenta and 106 other cell types or tissues"/>
</dbReference>
<dbReference type="GO" id="GO:0005604">
    <property type="term" value="C:basement membrane"/>
    <property type="evidence" value="ECO:0007669"/>
    <property type="project" value="UniProtKB-SubCell"/>
</dbReference>
<dbReference type="GO" id="GO:0005737">
    <property type="term" value="C:cytoplasm"/>
    <property type="evidence" value="ECO:0000318"/>
    <property type="project" value="GO_Central"/>
</dbReference>
<dbReference type="GO" id="GO:0005829">
    <property type="term" value="C:cytosol"/>
    <property type="evidence" value="ECO:0000314"/>
    <property type="project" value="AgBase"/>
</dbReference>
<dbReference type="GO" id="GO:0005768">
    <property type="term" value="C:endosome"/>
    <property type="evidence" value="ECO:0000250"/>
    <property type="project" value="UniProtKB"/>
</dbReference>
<dbReference type="GO" id="GO:0065010">
    <property type="term" value="C:extracellular membrane-bounded organelle"/>
    <property type="evidence" value="ECO:0000314"/>
    <property type="project" value="AgBase"/>
</dbReference>
<dbReference type="GO" id="GO:0043231">
    <property type="term" value="C:intracellular membrane-bounded organelle"/>
    <property type="evidence" value="ECO:0000314"/>
    <property type="project" value="AgBase"/>
</dbReference>
<dbReference type="GO" id="GO:0042470">
    <property type="term" value="C:melanosome"/>
    <property type="evidence" value="ECO:0007669"/>
    <property type="project" value="UniProtKB-SubCell"/>
</dbReference>
<dbReference type="GO" id="GO:0016020">
    <property type="term" value="C:membrane"/>
    <property type="evidence" value="ECO:0000314"/>
    <property type="project" value="AgBase"/>
</dbReference>
<dbReference type="GO" id="GO:0005634">
    <property type="term" value="C:nucleus"/>
    <property type="evidence" value="ECO:0000314"/>
    <property type="project" value="AgBase"/>
</dbReference>
<dbReference type="GO" id="GO:0005886">
    <property type="term" value="C:plasma membrane"/>
    <property type="evidence" value="ECO:0000318"/>
    <property type="project" value="GO_Central"/>
</dbReference>
<dbReference type="GO" id="GO:0031982">
    <property type="term" value="C:vesicle"/>
    <property type="evidence" value="ECO:0000314"/>
    <property type="project" value="AgBase"/>
</dbReference>
<dbReference type="GO" id="GO:0012506">
    <property type="term" value="C:vesicle membrane"/>
    <property type="evidence" value="ECO:0000318"/>
    <property type="project" value="GO_Central"/>
</dbReference>
<dbReference type="GO" id="GO:0005262">
    <property type="term" value="F:calcium channel activity"/>
    <property type="evidence" value="ECO:0000315"/>
    <property type="project" value="AgBase"/>
</dbReference>
<dbReference type="GO" id="GO:0005509">
    <property type="term" value="F:calcium ion binding"/>
    <property type="evidence" value="ECO:0007669"/>
    <property type="project" value="InterPro"/>
</dbReference>
<dbReference type="GO" id="GO:0005544">
    <property type="term" value="F:calcium-dependent phospholipid binding"/>
    <property type="evidence" value="ECO:0000318"/>
    <property type="project" value="GO_Central"/>
</dbReference>
<dbReference type="GO" id="GO:0008092">
    <property type="term" value="F:cytoskeletal protein binding"/>
    <property type="evidence" value="ECO:0007669"/>
    <property type="project" value="InterPro"/>
</dbReference>
<dbReference type="GO" id="GO:0001786">
    <property type="term" value="F:phosphatidylserine binding"/>
    <property type="evidence" value="ECO:0000353"/>
    <property type="project" value="AgBase"/>
</dbReference>
<dbReference type="GO" id="GO:0004859">
    <property type="term" value="F:phospholipase inhibitor activity"/>
    <property type="evidence" value="ECO:0007669"/>
    <property type="project" value="InterPro"/>
</dbReference>
<dbReference type="GO" id="GO:0031214">
    <property type="term" value="P:biomineral tissue development"/>
    <property type="evidence" value="ECO:0000314"/>
    <property type="project" value="AgBase"/>
</dbReference>
<dbReference type="GO" id="GO:0070509">
    <property type="term" value="P:calcium ion import"/>
    <property type="evidence" value="ECO:0000315"/>
    <property type="project" value="AgBase"/>
</dbReference>
<dbReference type="GO" id="GO:0070588">
    <property type="term" value="P:calcium ion transmembrane transport"/>
    <property type="evidence" value="ECO:0000314"/>
    <property type="project" value="AgBase"/>
</dbReference>
<dbReference type="GO" id="GO:1905602">
    <property type="term" value="P:positive regulation of receptor-mediated endocytosis involved in cholesterol transport"/>
    <property type="evidence" value="ECO:0000318"/>
    <property type="project" value="GO_Central"/>
</dbReference>
<dbReference type="FunFam" id="1.10.220.10:FF:000001">
    <property type="entry name" value="Annexin"/>
    <property type="match status" value="1"/>
</dbReference>
<dbReference type="FunFam" id="1.10.220.10:FF:000002">
    <property type="entry name" value="Annexin"/>
    <property type="match status" value="1"/>
</dbReference>
<dbReference type="FunFam" id="1.10.220.10:FF:000003">
    <property type="entry name" value="Annexin"/>
    <property type="match status" value="1"/>
</dbReference>
<dbReference type="FunFam" id="1.10.220.10:FF:000007">
    <property type="entry name" value="Annexin"/>
    <property type="match status" value="1"/>
</dbReference>
<dbReference type="Gene3D" id="1.10.220.10">
    <property type="entry name" value="Annexin"/>
    <property type="match status" value="4"/>
</dbReference>
<dbReference type="InterPro" id="IPR001464">
    <property type="entry name" value="Annexin"/>
</dbReference>
<dbReference type="InterPro" id="IPR018502">
    <property type="entry name" value="Annexin_repeat"/>
</dbReference>
<dbReference type="InterPro" id="IPR018252">
    <property type="entry name" value="Annexin_repeat_CS"/>
</dbReference>
<dbReference type="InterPro" id="IPR037104">
    <property type="entry name" value="Annexin_sf"/>
</dbReference>
<dbReference type="InterPro" id="IPR002389">
    <property type="entry name" value="ANX2"/>
</dbReference>
<dbReference type="PANTHER" id="PTHR10502">
    <property type="entry name" value="ANNEXIN"/>
    <property type="match status" value="1"/>
</dbReference>
<dbReference type="PANTHER" id="PTHR10502:SF18">
    <property type="entry name" value="ANNEXIN A2-RELATED"/>
    <property type="match status" value="1"/>
</dbReference>
<dbReference type="Pfam" id="PF00191">
    <property type="entry name" value="Annexin"/>
    <property type="match status" value="4"/>
</dbReference>
<dbReference type="PRINTS" id="PR00196">
    <property type="entry name" value="ANNEXIN"/>
</dbReference>
<dbReference type="PRINTS" id="PR00198">
    <property type="entry name" value="ANNEXINII"/>
</dbReference>
<dbReference type="SMART" id="SM00335">
    <property type="entry name" value="ANX"/>
    <property type="match status" value="4"/>
</dbReference>
<dbReference type="SUPFAM" id="SSF47874">
    <property type="entry name" value="Annexin"/>
    <property type="match status" value="1"/>
</dbReference>
<dbReference type="PROSITE" id="PS00223">
    <property type="entry name" value="ANNEXIN_1"/>
    <property type="match status" value="4"/>
</dbReference>
<dbReference type="PROSITE" id="PS51897">
    <property type="entry name" value="ANNEXIN_2"/>
    <property type="match status" value="4"/>
</dbReference>
<proteinExistence type="evidence at protein level"/>
<evidence type="ECO:0000250" key="1"/>
<evidence type="ECO:0000250" key="2">
    <source>
        <dbReference type="UniProtKB" id="A2SW69"/>
    </source>
</evidence>
<evidence type="ECO:0000250" key="3">
    <source>
        <dbReference type="UniProtKB" id="P07355"/>
    </source>
</evidence>
<evidence type="ECO:0000250" key="4">
    <source>
        <dbReference type="UniProtKB" id="P07356"/>
    </source>
</evidence>
<evidence type="ECO:0000250" key="5">
    <source>
        <dbReference type="UniProtKB" id="Q6TEQ7"/>
    </source>
</evidence>
<evidence type="ECO:0000255" key="6"/>
<evidence type="ECO:0000255" key="7">
    <source>
        <dbReference type="PROSITE-ProRule" id="PRU01245"/>
    </source>
</evidence>
<evidence type="ECO:0000269" key="8">
    <source>
    </source>
</evidence>
<evidence type="ECO:0000305" key="9"/>
<evidence type="ECO:0007829" key="10">
    <source>
        <dbReference type="PDB" id="4X9P"/>
    </source>
</evidence>
<sequence>MSTVHEILCKLSLEGDHSTPPSAYGSVKAYTNFDAERDALNIETAIKTKGVDEVTIVNILTNRSNEQRQDIAFAYQRRTKKELASALKSALSGHLETVILGLLKTPAQYDASELKASMKGLGTDEDSLIEIICSRTNQELQEINRVYKEMYKTDLEKDIVSDTSGDFRKLMVALAKGRRAEDGSVIDYELIDQDARDLYDAGVKRKGTDVPKWISIMTERSVCHLQKVFERYKSYSPYDMLESIKKEVKGDLENAFLNLVQCIQNKPLYFADRLYDSMKGKGTRDKVLIRIMVSRSEVDMLKIRSEFKKKYGKSLYYYIQQDTKGDYQKALLYLCGGDD</sequence>
<comment type="function">
    <text evidence="3 4">Calcium-regulated membrane-binding protein whose affinity for calcium is greatly enhanced by anionic phospholipids. It binds two calcium ions with high affinity. May be involved in heat-stress response. Inhibits PCSK9-enhanced LDLR degradation, probably reduces PCSK9 protein levels via a translational mechanism but also competes with LDLR for binding with PCSK9. Binds to endosomes damaged by phagocytosis of particulate wear debris and participates in endosomal membrane stabilization, thereby limiting NLRP3 inflammasome activation (By similarity). Required for endothelial cell surface plasmin generation and may support fibrinolytic surveillance and neoangiogenesis (By similarity).</text>
</comment>
<comment type="subunit">
    <text evidence="2 3 4 5">Heterotetramer containing 2 light chains of S100A10/p11 and 2 heavy chains of ANXA2/p36 (By similarity). Interacts with ATP1B1 (By similarity). Interacts with DYSF (By similarity). Interacts with COCH. Interacts (via repeat Annexin 1) with PCSK9 (via the C-terminal domain); the interaction inhibits the degradation of LDLR. Interacts with CEACAM1 (via the cytoplasmic domain); this interaction is regulated by phosphorylation of CEACAM1 (By similarity). Interacts with APPL2 and APPL1; targets APPL2 to endosomes and acting in parallel to RAB5A (By similarity). Interacts with S100A4 (By similarity). May interact with UBAP2 (By similarity). Interacts with PLEKHG4B; this interaction is required for PLEKHG4B localization to cell-cell adhesions (By similarity).</text>
</comment>
<comment type="subcellular location">
    <subcellularLocation>
        <location>Secreted</location>
        <location>Extracellular space</location>
        <location>Extracellular matrix</location>
        <location>Basement membrane</location>
    </subcellularLocation>
    <subcellularLocation>
        <location evidence="1">Melanosome</location>
    </subcellularLocation>
    <text>In the lamina beneath the plasma membrane.</text>
</comment>
<comment type="domain">
    <text>A pair of annexin repeats may form one binding site for calcium and phospholipid.</text>
</comment>
<comment type="PTM">
    <text evidence="1">ISGylated.</text>
</comment>
<comment type="miscellaneous">
    <text>It may cross-link plasma membrane phospholipids with actin and the cytoskeleton and be involved with exocytosis.</text>
</comment>
<comment type="similarity">
    <text evidence="7 9">Belongs to the annexin family.</text>
</comment>
<comment type="online information" name="Protein Spotlight">
    <link uri="https://www.proteinspotlight.org/back_issues/086"/>
    <text>Red velvet - Issue 86 of September 2007</text>
</comment>
<accession>P04272</accession>
<accession>Q3ZCC7</accession>
<accession>Q5E9B0</accession>
<reference key="1">
    <citation type="journal article" date="1986" name="Biochemistry">
        <title>Primary structure of bovine calpactin I heavy chain (p36), a major cellular substrate for retroviral protein-tyrosine kinases: homology with the human phospholipase A2 inhibitor lipocortin.</title>
        <authorList>
            <person name="Kristensen T."/>
            <person name="Saris C.J.M."/>
            <person name="Hunter T."/>
            <person name="Hicks L.J."/>
            <person name="Noonan D.J."/>
            <person name="Glenney J.R. Jr."/>
            <person name="Tack B.F."/>
        </authorList>
    </citation>
    <scope>NUCLEOTIDE SEQUENCE [MRNA]</scope>
    <source>
        <tissue>Kidney</tissue>
    </source>
</reference>
<reference key="2">
    <citation type="journal article" date="2005" name="BMC Genomics">
        <title>Characterization of 954 bovine full-CDS cDNA sequences.</title>
        <authorList>
            <person name="Harhay G.P."/>
            <person name="Sonstegard T.S."/>
            <person name="Keele J.W."/>
            <person name="Heaton M.P."/>
            <person name="Clawson M.L."/>
            <person name="Snelling W.M."/>
            <person name="Wiedmann R.T."/>
            <person name="Van Tassell C.P."/>
            <person name="Smith T.P.L."/>
        </authorList>
    </citation>
    <scope>NUCLEOTIDE SEQUENCE [LARGE SCALE MRNA]</scope>
</reference>
<reference key="3">
    <citation type="submission" date="2005-08" db="EMBL/GenBank/DDBJ databases">
        <authorList>
            <consortium name="NIH - Mammalian Gene Collection (MGC) project"/>
        </authorList>
    </citation>
    <scope>NUCLEOTIDE SEQUENCE [LARGE SCALE MRNA]</scope>
    <source>
        <strain>Crossbred X Angus</strain>
        <tissue>Ileum</tissue>
    </source>
</reference>
<reference key="4">
    <citation type="journal article" date="1986" name="J. Biol. Chem.">
        <title>Association of the S-100-related calpactin I light chain with the NH2-terminal tail of the 36-kDa heavy chain.</title>
        <authorList>
            <person name="Glenney J.R. Jr."/>
            <person name="Boudreau M."/>
            <person name="Galyean R."/>
            <person name="Hunter T."/>
            <person name="Tack B."/>
        </authorList>
    </citation>
    <scope>ACETYLATION AT SER-2</scope>
</reference>
<organism>
    <name type="scientific">Bos taurus</name>
    <name type="common">Bovine</name>
    <dbReference type="NCBI Taxonomy" id="9913"/>
    <lineage>
        <taxon>Eukaryota</taxon>
        <taxon>Metazoa</taxon>
        <taxon>Chordata</taxon>
        <taxon>Craniata</taxon>
        <taxon>Vertebrata</taxon>
        <taxon>Euteleostomi</taxon>
        <taxon>Mammalia</taxon>
        <taxon>Eutheria</taxon>
        <taxon>Laurasiatheria</taxon>
        <taxon>Artiodactyla</taxon>
        <taxon>Ruminantia</taxon>
        <taxon>Pecora</taxon>
        <taxon>Bovidae</taxon>
        <taxon>Bovinae</taxon>
        <taxon>Bos</taxon>
    </lineage>
</organism>
<keyword id="KW-0002">3D-structure</keyword>
<keyword id="KW-0007">Acetylation</keyword>
<keyword id="KW-0041">Annexin</keyword>
<keyword id="KW-0084">Basement membrane</keyword>
<keyword id="KW-0106">Calcium</keyword>
<keyword id="KW-0111">Calcium/phospholipid-binding</keyword>
<keyword id="KW-0272">Extracellular matrix</keyword>
<keyword id="KW-1017">Isopeptide bond</keyword>
<keyword id="KW-0597">Phosphoprotein</keyword>
<keyword id="KW-1185">Reference proteome</keyword>
<keyword id="KW-0677">Repeat</keyword>
<keyword id="KW-0964">Secreted</keyword>
<keyword id="KW-0832">Ubl conjugation</keyword>
<name>ANXA2_BOVIN</name>